<comment type="function">
    <text evidence="1">Produces ATP from ADP in the presence of a proton gradient across the membrane.</text>
</comment>
<comment type="subunit">
    <text>F-type ATPases have 2 components, CF(1) - the catalytic core - and CF(0) - the membrane proton channel. CF(1) has five subunits: alpha(3), beta(3), gamma(1), delta(1), epsilon(1). CF(0) has three main subunits: a, b and c.</text>
</comment>
<comment type="subcellular location">
    <subcellularLocation>
        <location evidence="1">Cell membrane</location>
        <topology evidence="1">Peripheral membrane protein</topology>
    </subcellularLocation>
</comment>
<comment type="similarity">
    <text evidence="1">Belongs to the ATPase epsilon chain family.</text>
</comment>
<proteinExistence type="inferred from homology"/>
<gene>
    <name evidence="1" type="primary">atpC</name>
    <name type="ordered locus">gbs0882</name>
</gene>
<protein>
    <recommendedName>
        <fullName evidence="1">ATP synthase epsilon chain</fullName>
    </recommendedName>
    <alternativeName>
        <fullName evidence="1">ATP synthase F1 sector epsilon subunit</fullName>
    </alternativeName>
    <alternativeName>
        <fullName evidence="1">F-ATPase epsilon subunit</fullName>
    </alternativeName>
</protein>
<evidence type="ECO:0000255" key="1">
    <source>
        <dbReference type="HAMAP-Rule" id="MF_00530"/>
    </source>
</evidence>
<dbReference type="EMBL" id="AL766847">
    <property type="protein sequence ID" value="CAD46526.1"/>
    <property type="molecule type" value="Genomic_DNA"/>
</dbReference>
<dbReference type="RefSeq" id="WP_000068053.1">
    <property type="nucleotide sequence ID" value="NC_004368.1"/>
</dbReference>
<dbReference type="SMR" id="Q8E5U7"/>
<dbReference type="KEGG" id="san:atpC"/>
<dbReference type="eggNOG" id="COG0355">
    <property type="taxonomic scope" value="Bacteria"/>
</dbReference>
<dbReference type="HOGENOM" id="CLU_084338_1_0_9"/>
<dbReference type="Proteomes" id="UP000000823">
    <property type="component" value="Chromosome"/>
</dbReference>
<dbReference type="GO" id="GO:0005886">
    <property type="term" value="C:plasma membrane"/>
    <property type="evidence" value="ECO:0007669"/>
    <property type="project" value="UniProtKB-SubCell"/>
</dbReference>
<dbReference type="GO" id="GO:0045259">
    <property type="term" value="C:proton-transporting ATP synthase complex"/>
    <property type="evidence" value="ECO:0007669"/>
    <property type="project" value="UniProtKB-KW"/>
</dbReference>
<dbReference type="GO" id="GO:0005524">
    <property type="term" value="F:ATP binding"/>
    <property type="evidence" value="ECO:0007669"/>
    <property type="project" value="UniProtKB-UniRule"/>
</dbReference>
<dbReference type="GO" id="GO:0046933">
    <property type="term" value="F:proton-transporting ATP synthase activity, rotational mechanism"/>
    <property type="evidence" value="ECO:0007669"/>
    <property type="project" value="UniProtKB-UniRule"/>
</dbReference>
<dbReference type="CDD" id="cd12152">
    <property type="entry name" value="F1-ATPase_delta"/>
    <property type="match status" value="1"/>
</dbReference>
<dbReference type="Gene3D" id="1.20.5.440">
    <property type="entry name" value="ATP synthase delta/epsilon subunit, C-terminal domain"/>
    <property type="match status" value="1"/>
</dbReference>
<dbReference type="Gene3D" id="2.60.15.10">
    <property type="entry name" value="F0F1 ATP synthase delta/epsilon subunit, N-terminal"/>
    <property type="match status" value="1"/>
</dbReference>
<dbReference type="HAMAP" id="MF_00530">
    <property type="entry name" value="ATP_synth_epsil_bac"/>
    <property type="match status" value="1"/>
</dbReference>
<dbReference type="InterPro" id="IPR036794">
    <property type="entry name" value="ATP_F1_dsu/esu_C_sf"/>
</dbReference>
<dbReference type="InterPro" id="IPR001469">
    <property type="entry name" value="ATP_synth_F1_dsu/esu"/>
</dbReference>
<dbReference type="InterPro" id="IPR020546">
    <property type="entry name" value="ATP_synth_F1_dsu/esu_N"/>
</dbReference>
<dbReference type="InterPro" id="IPR020547">
    <property type="entry name" value="ATP_synth_F1_esu_C"/>
</dbReference>
<dbReference type="InterPro" id="IPR036771">
    <property type="entry name" value="ATPsynth_dsu/esu_N"/>
</dbReference>
<dbReference type="NCBIfam" id="TIGR01216">
    <property type="entry name" value="ATP_synt_epsi"/>
    <property type="match status" value="1"/>
</dbReference>
<dbReference type="NCBIfam" id="NF001846">
    <property type="entry name" value="PRK00571.1-3"/>
    <property type="match status" value="1"/>
</dbReference>
<dbReference type="PANTHER" id="PTHR13822">
    <property type="entry name" value="ATP SYNTHASE DELTA/EPSILON CHAIN"/>
    <property type="match status" value="1"/>
</dbReference>
<dbReference type="PANTHER" id="PTHR13822:SF10">
    <property type="entry name" value="ATP SYNTHASE EPSILON CHAIN, CHLOROPLASTIC"/>
    <property type="match status" value="1"/>
</dbReference>
<dbReference type="Pfam" id="PF00401">
    <property type="entry name" value="ATP-synt_DE"/>
    <property type="match status" value="1"/>
</dbReference>
<dbReference type="Pfam" id="PF02823">
    <property type="entry name" value="ATP-synt_DE_N"/>
    <property type="match status" value="1"/>
</dbReference>
<dbReference type="SUPFAM" id="SSF46604">
    <property type="entry name" value="Epsilon subunit of F1F0-ATP synthase C-terminal domain"/>
    <property type="match status" value="1"/>
</dbReference>
<dbReference type="SUPFAM" id="SSF51344">
    <property type="entry name" value="Epsilon subunit of F1F0-ATP synthase N-terminal domain"/>
    <property type="match status" value="1"/>
</dbReference>
<organism>
    <name type="scientific">Streptococcus agalactiae serotype III (strain NEM316)</name>
    <dbReference type="NCBI Taxonomy" id="211110"/>
    <lineage>
        <taxon>Bacteria</taxon>
        <taxon>Bacillati</taxon>
        <taxon>Bacillota</taxon>
        <taxon>Bacilli</taxon>
        <taxon>Lactobacillales</taxon>
        <taxon>Streptococcaceae</taxon>
        <taxon>Streptococcus</taxon>
    </lineage>
</organism>
<keyword id="KW-0066">ATP synthesis</keyword>
<keyword id="KW-1003">Cell membrane</keyword>
<keyword id="KW-0139">CF(1)</keyword>
<keyword id="KW-0375">Hydrogen ion transport</keyword>
<keyword id="KW-0406">Ion transport</keyword>
<keyword id="KW-0472">Membrane</keyword>
<keyword id="KW-0813">Transport</keyword>
<sequence>MAQLTVQVVTPDGIRYDHHASLITVRTPDGEMGILPGHINLIAPLIVHQMKINRSHQEGVDWVAVNGGIIEVNEDQVTIVADSAERARDIDLNRAERAKERAERALEKAQTTQNIDEMRRAEVALRRAINRISVGKK</sequence>
<name>ATPE_STRA3</name>
<reference key="1">
    <citation type="journal article" date="2002" name="Mol. Microbiol.">
        <title>Genome sequence of Streptococcus agalactiae, a pathogen causing invasive neonatal disease.</title>
        <authorList>
            <person name="Glaser P."/>
            <person name="Rusniok C."/>
            <person name="Buchrieser C."/>
            <person name="Chevalier F."/>
            <person name="Frangeul L."/>
            <person name="Msadek T."/>
            <person name="Zouine M."/>
            <person name="Couve E."/>
            <person name="Lalioui L."/>
            <person name="Poyart C."/>
            <person name="Trieu-Cuot P."/>
            <person name="Kunst F."/>
        </authorList>
    </citation>
    <scope>NUCLEOTIDE SEQUENCE [LARGE SCALE GENOMIC DNA]</scope>
    <source>
        <strain>NEM316</strain>
    </source>
</reference>
<feature type="chain" id="PRO_0000188210" description="ATP synthase epsilon chain">
    <location>
        <begin position="1"/>
        <end position="137"/>
    </location>
</feature>
<accession>Q8E5U7</accession>